<name>ACPS_STRPQ</name>
<protein>
    <recommendedName>
        <fullName evidence="1">Holo-[acyl-carrier-protein] synthase</fullName>
        <shortName evidence="1">Holo-ACP synthase</shortName>
        <ecNumber evidence="1">2.7.8.7</ecNumber>
    </recommendedName>
    <alternativeName>
        <fullName evidence="1">4'-phosphopantetheinyl transferase AcpS</fullName>
    </alternativeName>
</protein>
<organism>
    <name type="scientific">Streptococcus pyogenes serotype M3 (strain SSI-1)</name>
    <dbReference type="NCBI Taxonomy" id="193567"/>
    <lineage>
        <taxon>Bacteria</taxon>
        <taxon>Bacillati</taxon>
        <taxon>Bacillota</taxon>
        <taxon>Bacilli</taxon>
        <taxon>Lactobacillales</taxon>
        <taxon>Streptococcaceae</taxon>
        <taxon>Streptococcus</taxon>
    </lineage>
</organism>
<evidence type="ECO:0000255" key="1">
    <source>
        <dbReference type="HAMAP-Rule" id="MF_00101"/>
    </source>
</evidence>
<reference key="1">
    <citation type="journal article" date="2003" name="Genome Res.">
        <title>Genome sequence of an M3 strain of Streptococcus pyogenes reveals a large-scale genomic rearrangement in invasive strains and new insights into phage evolution.</title>
        <authorList>
            <person name="Nakagawa I."/>
            <person name="Kurokawa K."/>
            <person name="Yamashita A."/>
            <person name="Nakata M."/>
            <person name="Tomiyasu Y."/>
            <person name="Okahashi N."/>
            <person name="Kawabata S."/>
            <person name="Yamazaki K."/>
            <person name="Shiba T."/>
            <person name="Yasunaga T."/>
            <person name="Hayashi H."/>
            <person name="Hattori M."/>
            <person name="Hamada S."/>
        </authorList>
    </citation>
    <scope>NUCLEOTIDE SEQUENCE [LARGE SCALE GENOMIC DNA]</scope>
    <source>
        <strain>SSI-1</strain>
    </source>
</reference>
<sequence>MIVGHGIDLQEISAIEKVYQRNPRFAQKILTEQELAIFESFPYKRRLSYLAGRWSGKEAFAKAIGTGIGRLTFQDIEILNDVRGCPILTKSPFKGNSFISISHSGNYVQASVILEDKK</sequence>
<accession>P0CZ51</accession>
<accession>P63473</accession>
<accession>Q8NZK3</accession>
<gene>
    <name evidence="1" type="primary">acpS</name>
    <name type="ordered locus">SPs0303</name>
</gene>
<dbReference type="EC" id="2.7.8.7" evidence="1"/>
<dbReference type="EMBL" id="BA000034">
    <property type="protein sequence ID" value="BAC63398.1"/>
    <property type="molecule type" value="Genomic_DNA"/>
</dbReference>
<dbReference type="RefSeq" id="WP_002983199.1">
    <property type="nucleotide sequence ID" value="NC_004606.1"/>
</dbReference>
<dbReference type="SMR" id="P0CZ51"/>
<dbReference type="GeneID" id="69900361"/>
<dbReference type="KEGG" id="sps:SPs0303"/>
<dbReference type="HOGENOM" id="CLU_089696_1_2_9"/>
<dbReference type="GO" id="GO:0005737">
    <property type="term" value="C:cytoplasm"/>
    <property type="evidence" value="ECO:0007669"/>
    <property type="project" value="UniProtKB-SubCell"/>
</dbReference>
<dbReference type="GO" id="GO:0008897">
    <property type="term" value="F:holo-[acyl-carrier-protein] synthase activity"/>
    <property type="evidence" value="ECO:0007669"/>
    <property type="project" value="UniProtKB-UniRule"/>
</dbReference>
<dbReference type="GO" id="GO:0000287">
    <property type="term" value="F:magnesium ion binding"/>
    <property type="evidence" value="ECO:0007669"/>
    <property type="project" value="UniProtKB-UniRule"/>
</dbReference>
<dbReference type="GO" id="GO:0006633">
    <property type="term" value="P:fatty acid biosynthetic process"/>
    <property type="evidence" value="ECO:0007669"/>
    <property type="project" value="UniProtKB-UniRule"/>
</dbReference>
<dbReference type="Gene3D" id="3.90.470.20">
    <property type="entry name" value="4'-phosphopantetheinyl transferase domain"/>
    <property type="match status" value="1"/>
</dbReference>
<dbReference type="HAMAP" id="MF_00101">
    <property type="entry name" value="AcpS"/>
    <property type="match status" value="1"/>
</dbReference>
<dbReference type="InterPro" id="IPR008278">
    <property type="entry name" value="4-PPantetheinyl_Trfase_dom"/>
</dbReference>
<dbReference type="InterPro" id="IPR037143">
    <property type="entry name" value="4-PPantetheinyl_Trfase_dom_sf"/>
</dbReference>
<dbReference type="InterPro" id="IPR002582">
    <property type="entry name" value="ACPS"/>
</dbReference>
<dbReference type="InterPro" id="IPR004568">
    <property type="entry name" value="Ppantetheine-prot_Trfase_dom"/>
</dbReference>
<dbReference type="NCBIfam" id="TIGR00516">
    <property type="entry name" value="acpS"/>
    <property type="match status" value="1"/>
</dbReference>
<dbReference type="NCBIfam" id="TIGR00556">
    <property type="entry name" value="pantethn_trn"/>
    <property type="match status" value="1"/>
</dbReference>
<dbReference type="Pfam" id="PF01648">
    <property type="entry name" value="ACPS"/>
    <property type="match status" value="1"/>
</dbReference>
<dbReference type="SUPFAM" id="SSF56214">
    <property type="entry name" value="4'-phosphopantetheinyl transferase"/>
    <property type="match status" value="1"/>
</dbReference>
<feature type="chain" id="PRO_0000411263" description="Holo-[acyl-carrier-protein] synthase">
    <location>
        <begin position="1"/>
        <end position="118"/>
    </location>
</feature>
<feature type="binding site" evidence="1">
    <location>
        <position position="8"/>
    </location>
    <ligand>
        <name>Mg(2+)</name>
        <dbReference type="ChEBI" id="CHEBI:18420"/>
    </ligand>
</feature>
<feature type="binding site" evidence="1">
    <location>
        <position position="58"/>
    </location>
    <ligand>
        <name>Mg(2+)</name>
        <dbReference type="ChEBI" id="CHEBI:18420"/>
    </ligand>
</feature>
<proteinExistence type="inferred from homology"/>
<comment type="function">
    <text evidence="1">Transfers the 4'-phosphopantetheine moiety from coenzyme A to a Ser of acyl-carrier-protein.</text>
</comment>
<comment type="catalytic activity">
    <reaction evidence="1">
        <text>apo-[ACP] + CoA = holo-[ACP] + adenosine 3',5'-bisphosphate + H(+)</text>
        <dbReference type="Rhea" id="RHEA:12068"/>
        <dbReference type="Rhea" id="RHEA-COMP:9685"/>
        <dbReference type="Rhea" id="RHEA-COMP:9690"/>
        <dbReference type="ChEBI" id="CHEBI:15378"/>
        <dbReference type="ChEBI" id="CHEBI:29999"/>
        <dbReference type="ChEBI" id="CHEBI:57287"/>
        <dbReference type="ChEBI" id="CHEBI:58343"/>
        <dbReference type="ChEBI" id="CHEBI:64479"/>
        <dbReference type="EC" id="2.7.8.7"/>
    </reaction>
</comment>
<comment type="cofactor">
    <cofactor evidence="1">
        <name>Mg(2+)</name>
        <dbReference type="ChEBI" id="CHEBI:18420"/>
    </cofactor>
</comment>
<comment type="subcellular location">
    <subcellularLocation>
        <location evidence="1">Cytoplasm</location>
    </subcellularLocation>
</comment>
<comment type="similarity">
    <text evidence="1">Belongs to the P-Pant transferase superfamily. AcpS family.</text>
</comment>
<keyword id="KW-0963">Cytoplasm</keyword>
<keyword id="KW-0275">Fatty acid biosynthesis</keyword>
<keyword id="KW-0276">Fatty acid metabolism</keyword>
<keyword id="KW-0444">Lipid biosynthesis</keyword>
<keyword id="KW-0443">Lipid metabolism</keyword>
<keyword id="KW-0460">Magnesium</keyword>
<keyword id="KW-0479">Metal-binding</keyword>
<keyword id="KW-0808">Transferase</keyword>